<organism>
    <name type="scientific">Mus musculus</name>
    <name type="common">Mouse</name>
    <dbReference type="NCBI Taxonomy" id="10090"/>
    <lineage>
        <taxon>Eukaryota</taxon>
        <taxon>Metazoa</taxon>
        <taxon>Chordata</taxon>
        <taxon>Craniata</taxon>
        <taxon>Vertebrata</taxon>
        <taxon>Euteleostomi</taxon>
        <taxon>Mammalia</taxon>
        <taxon>Eutheria</taxon>
        <taxon>Euarchontoglires</taxon>
        <taxon>Glires</taxon>
        <taxon>Rodentia</taxon>
        <taxon>Myomorpha</taxon>
        <taxon>Muroidea</taxon>
        <taxon>Muridae</taxon>
        <taxon>Murinae</taxon>
        <taxon>Mus</taxon>
        <taxon>Mus</taxon>
    </lineage>
</organism>
<evidence type="ECO:0000250" key="1">
    <source>
        <dbReference type="UniProtKB" id="Q68CP9"/>
    </source>
</evidence>
<evidence type="ECO:0000255" key="2">
    <source>
        <dbReference type="PROSITE-ProRule" id="PRU00355"/>
    </source>
</evidence>
<evidence type="ECO:0000255" key="3">
    <source>
        <dbReference type="PROSITE-ProRule" id="PRU00858"/>
    </source>
</evidence>
<evidence type="ECO:0000256" key="4">
    <source>
        <dbReference type="SAM" id="MobiDB-lite"/>
    </source>
</evidence>
<evidence type="ECO:0000269" key="5">
    <source>
    </source>
</evidence>
<evidence type="ECO:0000303" key="6">
    <source>
    </source>
</evidence>
<evidence type="ECO:0000303" key="7">
    <source>
    </source>
</evidence>
<evidence type="ECO:0000303" key="8">
    <source>
    </source>
</evidence>
<evidence type="ECO:0000305" key="9"/>
<evidence type="ECO:0000312" key="10">
    <source>
        <dbReference type="MGI" id="MGI:1924294"/>
    </source>
</evidence>
<feature type="initiator methionine" description="Removed" evidence="1">
    <location>
        <position position="1"/>
    </location>
</feature>
<feature type="chain" id="PRO_0000442429" description="AT-rich interactive domain-containing protein 2">
    <location>
        <begin position="2"/>
        <end position="1828"/>
    </location>
</feature>
<feature type="domain" description="ARID" evidence="2">
    <location>
        <begin position="13"/>
        <end position="105"/>
    </location>
</feature>
<feature type="DNA-binding region" description="RFX-type winged-helix" evidence="3">
    <location>
        <begin position="524"/>
        <end position="603"/>
    </location>
</feature>
<feature type="zinc finger region" description="C2H2-type" evidence="1">
    <location>
        <begin position="1626"/>
        <end position="1651"/>
    </location>
</feature>
<feature type="region of interest" description="Disordered" evidence="4">
    <location>
        <begin position="824"/>
        <end position="843"/>
    </location>
</feature>
<feature type="region of interest" description="Disordered" evidence="4">
    <location>
        <begin position="962"/>
        <end position="1028"/>
    </location>
</feature>
<feature type="region of interest" description="Disordered" evidence="4">
    <location>
        <begin position="1245"/>
        <end position="1339"/>
    </location>
</feature>
<feature type="region of interest" description="Disordered" evidence="4">
    <location>
        <begin position="1360"/>
        <end position="1462"/>
    </location>
</feature>
<feature type="region of interest" description="Disordered" evidence="4">
    <location>
        <begin position="1483"/>
        <end position="1503"/>
    </location>
</feature>
<feature type="region of interest" description="Disordered" evidence="4">
    <location>
        <begin position="1566"/>
        <end position="1618"/>
    </location>
</feature>
<feature type="region of interest" description="Disordered" evidence="4">
    <location>
        <begin position="1697"/>
        <end position="1726"/>
    </location>
</feature>
<feature type="short sequence motif" description="LXXLL" evidence="1">
    <location>
        <begin position="313"/>
        <end position="317"/>
    </location>
</feature>
<feature type="compositionally biased region" description="Polar residues" evidence="4">
    <location>
        <begin position="987"/>
        <end position="1011"/>
    </location>
</feature>
<feature type="compositionally biased region" description="Low complexity" evidence="4">
    <location>
        <begin position="1012"/>
        <end position="1028"/>
    </location>
</feature>
<feature type="compositionally biased region" description="Basic and acidic residues" evidence="4">
    <location>
        <begin position="1245"/>
        <end position="1259"/>
    </location>
</feature>
<feature type="compositionally biased region" description="Polar residues" evidence="4">
    <location>
        <begin position="1267"/>
        <end position="1283"/>
    </location>
</feature>
<feature type="compositionally biased region" description="Polar residues" evidence="4">
    <location>
        <begin position="1295"/>
        <end position="1320"/>
    </location>
</feature>
<feature type="compositionally biased region" description="Polar residues" evidence="4">
    <location>
        <begin position="1366"/>
        <end position="1379"/>
    </location>
</feature>
<feature type="compositionally biased region" description="Polar residues" evidence="4">
    <location>
        <begin position="1390"/>
        <end position="1400"/>
    </location>
</feature>
<feature type="compositionally biased region" description="Polar residues" evidence="4">
    <location>
        <begin position="1419"/>
        <end position="1428"/>
    </location>
</feature>
<feature type="compositionally biased region" description="Low complexity" evidence="4">
    <location>
        <begin position="1453"/>
        <end position="1462"/>
    </location>
</feature>
<feature type="compositionally biased region" description="Polar residues" evidence="4">
    <location>
        <begin position="1491"/>
        <end position="1503"/>
    </location>
</feature>
<feature type="compositionally biased region" description="Polar residues" evidence="4">
    <location>
        <begin position="1567"/>
        <end position="1586"/>
    </location>
</feature>
<feature type="compositionally biased region" description="Low complexity" evidence="4">
    <location>
        <begin position="1594"/>
        <end position="1614"/>
    </location>
</feature>
<feature type="compositionally biased region" description="Polar residues" evidence="4">
    <location>
        <begin position="1702"/>
        <end position="1714"/>
    </location>
</feature>
<feature type="modified residue" description="N-acetylalanine" evidence="1">
    <location>
        <position position="2"/>
    </location>
</feature>
<feature type="modified residue" description="Phosphoserine" evidence="1">
    <location>
        <position position="4"/>
    </location>
</feature>
<feature type="modified residue" description="Phosphoserine" evidence="1">
    <location>
        <position position="631"/>
    </location>
</feature>
<feature type="modified residue" description="Phosphoserine" evidence="1">
    <location>
        <position position="635"/>
    </location>
</feature>
<feature type="modified residue" description="Phosphothreonine" evidence="1">
    <location>
        <position position="653"/>
    </location>
</feature>
<feature type="modified residue" description="Phosphoserine" evidence="1">
    <location>
        <position position="689"/>
    </location>
</feature>
<feature type="modified residue" description="Phosphothreonine" evidence="1">
    <location>
        <position position="692"/>
    </location>
</feature>
<feature type="modified residue" description="Phosphoserine" evidence="1">
    <location>
        <position position="1294"/>
    </location>
</feature>
<feature type="modified residue" description="Phosphoserine" evidence="1">
    <location>
        <position position="1385"/>
    </location>
</feature>
<feature type="modified residue" description="Phosphoserine" evidence="1">
    <location>
        <position position="1491"/>
    </location>
</feature>
<feature type="cross-link" description="Glycyl lysine isopeptide (Lys-Gly) (interchain with G-Cter in SUMO2)" evidence="1">
    <location>
        <position position="7"/>
    </location>
</feature>
<feature type="cross-link" description="Glycyl lysine isopeptide (Lys-Gly) (interchain with G-Cter in SUMO2)" evidence="1">
    <location>
        <position position="15"/>
    </location>
</feature>
<feature type="cross-link" description="Glycyl lysine isopeptide (Lys-Gly) (interchain with G-Cter in SUMO2)" evidence="1">
    <location>
        <position position="119"/>
    </location>
</feature>
<feature type="cross-link" description="Glycyl lysine isopeptide (Lys-Gly) (interchain with G-Cter in SUMO2)" evidence="1">
    <location>
        <position position="555"/>
    </location>
</feature>
<feature type="cross-link" description="Glycyl lysine isopeptide (Lys-Gly) (interchain with G-Cter in SUMO2)" evidence="1">
    <location>
        <position position="1695"/>
    </location>
</feature>
<feature type="cross-link" description="Glycyl lysine isopeptide (Lys-Gly) (interchain with G-Cter in SUMO2)" evidence="1">
    <location>
        <position position="1710"/>
    </location>
</feature>
<feature type="cross-link" description="Glycyl lysine isopeptide (Lys-Gly) (interchain with G-Cter in SUMO2)" evidence="1">
    <location>
        <position position="1725"/>
    </location>
</feature>
<name>ARID2_MOUSE</name>
<accession>E9Q7E2</accession>
<protein>
    <recommendedName>
        <fullName>AT-rich interactive domain-containing protein 2</fullName>
        <shortName evidence="9">ARID domain-containing protein 2</shortName>
    </recommendedName>
    <alternativeName>
        <fullName evidence="9">BRG1-associated factor 200</fullName>
        <shortName evidence="9">BAF200</shortName>
    </alternativeName>
    <alternativeName>
        <fullName evidence="9">Zinc finger protein with activation potential</fullName>
    </alternativeName>
    <alternativeName>
        <fullName evidence="6">Zipzap/p200</fullName>
    </alternativeName>
</protein>
<comment type="function">
    <text evidence="1 7 8">Involved in transcriptional activation and repression of select genes by chromatin remodeling (alteration of DNA-nucleosome topology). Required for the stability of the SWI/SNF chromatin remodeling complex SWI/SNF-B (PBAF). May be involved in targeting the complex to different genes. May be involved in regulating transcriptional activation of cardiac genes.</text>
</comment>
<comment type="subunit">
    <text evidence="1 7 8">Component of the SWI/SNF-B (PBAF) chromatin remodeling complex, at least composed of SMARCA4/BRG1, SMARCB1/BAF47/SNF5, ACTL6A/BAF53A or ACTL6B/BAF53B, SMARCE1/BAF57, SMARCD1/BAF60A, SMARCD2/BAF60B, perhaps SMARCD3/BAF60C, SMARCC1/BAF155, SMARCC2/BAF170, PBRM1/BAF180, ARID2/BAF200 and actin. Interacts with SRF. Forms complexes with SRF and SRF cofactors MYOCD, NKX2-5 and SRFBP1.</text>
</comment>
<comment type="subcellular location">
    <subcellularLocation>
        <location evidence="2 3">Nucleus</location>
    </subcellularLocation>
</comment>
<comment type="tissue specificity">
    <text evidence="5">Highly expressed in testis, expressed in heart, liver and kidney.</text>
</comment>
<comment type="similarity">
    <text evidence="3">Belongs to the RFX family.</text>
</comment>
<proteinExistence type="evidence at protein level"/>
<dbReference type="EMBL" id="AC133578">
    <property type="status" value="NOT_ANNOTATED_CDS"/>
    <property type="molecule type" value="Genomic_DNA"/>
</dbReference>
<dbReference type="CCDS" id="CCDS37185.2"/>
<dbReference type="RefSeq" id="NP_780460.3">
    <property type="nucleotide sequence ID" value="NM_175251.4"/>
</dbReference>
<dbReference type="SMR" id="E9Q7E2"/>
<dbReference type="ComplexPortal" id="CPX-1248">
    <property type="entry name" value="Polybromo-associated SWI/SNF ATP-dependent chromatin remodeling complex, ACTL6A variant"/>
</dbReference>
<dbReference type="ComplexPortal" id="CPX-1250">
    <property type="entry name" value="Polybromo-associated SWI/SNF ATP-dependent chromatin remodeling complex, ACTL6B variant"/>
</dbReference>
<dbReference type="CORUM" id="E9Q7E2"/>
<dbReference type="FunCoup" id="E9Q7E2">
    <property type="interactions" value="4611"/>
</dbReference>
<dbReference type="STRING" id="10090.ENSMUSP00000093969"/>
<dbReference type="GlyGen" id="E9Q7E2">
    <property type="glycosylation" value="7 sites, 1 N-linked glycan (1 site), 1 O-linked glycan (2 sites)"/>
</dbReference>
<dbReference type="iPTMnet" id="E9Q7E2"/>
<dbReference type="PhosphoSitePlus" id="E9Q7E2"/>
<dbReference type="PaxDb" id="10090-ENSMUSP00000093969"/>
<dbReference type="PeptideAtlas" id="E9Q7E2"/>
<dbReference type="ProteomicsDB" id="277289"/>
<dbReference type="Pumba" id="E9Q7E2"/>
<dbReference type="Antibodypedia" id="25264">
    <property type="antibodies" value="145 antibodies from 19 providers"/>
</dbReference>
<dbReference type="Ensembl" id="ENSMUST00000096250.5">
    <property type="protein sequence ID" value="ENSMUSP00000093969.5"/>
    <property type="gene ID" value="ENSMUSG00000033237.20"/>
</dbReference>
<dbReference type="GeneID" id="77044"/>
<dbReference type="KEGG" id="mmu:77044"/>
<dbReference type="UCSC" id="uc007xkd.2">
    <property type="organism name" value="mouse"/>
</dbReference>
<dbReference type="AGR" id="MGI:1924294"/>
<dbReference type="CTD" id="196528"/>
<dbReference type="MGI" id="MGI:1924294">
    <property type="gene designation" value="Arid2"/>
</dbReference>
<dbReference type="VEuPathDB" id="HostDB:ENSMUSG00000033237"/>
<dbReference type="eggNOG" id="KOG2312">
    <property type="taxonomic scope" value="Eukaryota"/>
</dbReference>
<dbReference type="eggNOG" id="KOG2744">
    <property type="taxonomic scope" value="Eukaryota"/>
</dbReference>
<dbReference type="GeneTree" id="ENSGT00390000016138"/>
<dbReference type="HOGENOM" id="CLU_003714_0_0_1"/>
<dbReference type="InParanoid" id="E9Q7E2"/>
<dbReference type="OMA" id="NAHTAYH"/>
<dbReference type="OrthoDB" id="338531at2759"/>
<dbReference type="PhylomeDB" id="E9Q7E2"/>
<dbReference type="TreeFam" id="TF106406"/>
<dbReference type="BioGRID-ORCS" id="77044">
    <property type="hits" value="13 hits in 83 CRISPR screens"/>
</dbReference>
<dbReference type="ChiTaRS" id="Arid2">
    <property type="organism name" value="mouse"/>
</dbReference>
<dbReference type="PRO" id="PR:E9Q7E2"/>
<dbReference type="Proteomes" id="UP000000589">
    <property type="component" value="Chromosome 15"/>
</dbReference>
<dbReference type="RNAct" id="E9Q7E2">
    <property type="molecule type" value="protein"/>
</dbReference>
<dbReference type="Bgee" id="ENSMUSG00000033237">
    <property type="expression patterns" value="Expressed in rostral migratory stream and 263 other cell types or tissues"/>
</dbReference>
<dbReference type="ExpressionAtlas" id="E9Q7E2">
    <property type="expression patterns" value="baseline and differential"/>
</dbReference>
<dbReference type="GO" id="GO:0000785">
    <property type="term" value="C:chromatin"/>
    <property type="evidence" value="ECO:0000303"/>
    <property type="project" value="ComplexPortal"/>
</dbReference>
<dbReference type="GO" id="GO:0000776">
    <property type="term" value="C:kinetochore"/>
    <property type="evidence" value="ECO:0000303"/>
    <property type="project" value="ComplexPortal"/>
</dbReference>
<dbReference type="GO" id="GO:0016363">
    <property type="term" value="C:nuclear matrix"/>
    <property type="evidence" value="ECO:0000303"/>
    <property type="project" value="ComplexPortal"/>
</dbReference>
<dbReference type="GO" id="GO:0005654">
    <property type="term" value="C:nucleoplasm"/>
    <property type="evidence" value="ECO:0007669"/>
    <property type="project" value="Ensembl"/>
</dbReference>
<dbReference type="GO" id="GO:0005886">
    <property type="term" value="C:plasma membrane"/>
    <property type="evidence" value="ECO:0007669"/>
    <property type="project" value="Ensembl"/>
</dbReference>
<dbReference type="GO" id="GO:0016586">
    <property type="term" value="C:RSC-type complex"/>
    <property type="evidence" value="ECO:0000303"/>
    <property type="project" value="ComplexPortal"/>
</dbReference>
<dbReference type="GO" id="GO:0016514">
    <property type="term" value="C:SWI/SNF complex"/>
    <property type="evidence" value="ECO:0007669"/>
    <property type="project" value="Ensembl"/>
</dbReference>
<dbReference type="GO" id="GO:0005667">
    <property type="term" value="C:transcription regulator complex"/>
    <property type="evidence" value="ECO:0000266"/>
    <property type="project" value="MGI"/>
</dbReference>
<dbReference type="GO" id="GO:0003677">
    <property type="term" value="F:DNA binding"/>
    <property type="evidence" value="ECO:0007669"/>
    <property type="project" value="UniProtKB-KW"/>
</dbReference>
<dbReference type="GO" id="GO:0008270">
    <property type="term" value="F:zinc ion binding"/>
    <property type="evidence" value="ECO:0007669"/>
    <property type="project" value="UniProtKB-KW"/>
</dbReference>
<dbReference type="GO" id="GO:0060038">
    <property type="term" value="P:cardiac muscle cell proliferation"/>
    <property type="evidence" value="ECO:0000315"/>
    <property type="project" value="MGI"/>
</dbReference>
<dbReference type="GO" id="GO:0006338">
    <property type="term" value="P:chromatin remodeling"/>
    <property type="evidence" value="ECO:0000303"/>
    <property type="project" value="ComplexPortal"/>
</dbReference>
<dbReference type="GO" id="GO:0072359">
    <property type="term" value="P:circulatory system development"/>
    <property type="evidence" value="ECO:0000315"/>
    <property type="project" value="MGI"/>
</dbReference>
<dbReference type="GO" id="GO:0060982">
    <property type="term" value="P:coronary artery morphogenesis"/>
    <property type="evidence" value="ECO:0000315"/>
    <property type="project" value="MGI"/>
</dbReference>
<dbReference type="GO" id="GO:0048568">
    <property type="term" value="P:embryonic organ development"/>
    <property type="evidence" value="ECO:0000315"/>
    <property type="project" value="MGI"/>
</dbReference>
<dbReference type="GO" id="GO:0003007">
    <property type="term" value="P:heart morphogenesis"/>
    <property type="evidence" value="ECO:0000315"/>
    <property type="project" value="MGI"/>
</dbReference>
<dbReference type="GO" id="GO:0042592">
    <property type="term" value="P:homeostatic process"/>
    <property type="evidence" value="ECO:0000315"/>
    <property type="project" value="MGI"/>
</dbReference>
<dbReference type="GO" id="GO:0030336">
    <property type="term" value="P:negative regulation of cell migration"/>
    <property type="evidence" value="ECO:0007669"/>
    <property type="project" value="Ensembl"/>
</dbReference>
<dbReference type="GO" id="GO:0008285">
    <property type="term" value="P:negative regulation of cell population proliferation"/>
    <property type="evidence" value="ECO:0007669"/>
    <property type="project" value="Ensembl"/>
</dbReference>
<dbReference type="GO" id="GO:0006337">
    <property type="term" value="P:nucleosome disassembly"/>
    <property type="evidence" value="ECO:0007669"/>
    <property type="project" value="Ensembl"/>
</dbReference>
<dbReference type="GO" id="GO:0045597">
    <property type="term" value="P:positive regulation of cell differentiation"/>
    <property type="evidence" value="ECO:0000303"/>
    <property type="project" value="ComplexPortal"/>
</dbReference>
<dbReference type="GO" id="GO:2000781">
    <property type="term" value="P:positive regulation of double-strand break repair"/>
    <property type="evidence" value="ECO:0000303"/>
    <property type="project" value="ComplexPortal"/>
</dbReference>
<dbReference type="GO" id="GO:1905168">
    <property type="term" value="P:positive regulation of double-strand break repair via homologous recombination"/>
    <property type="evidence" value="ECO:0007669"/>
    <property type="project" value="Ensembl"/>
</dbReference>
<dbReference type="GO" id="GO:0045663">
    <property type="term" value="P:positive regulation of myoblast differentiation"/>
    <property type="evidence" value="ECO:0000303"/>
    <property type="project" value="ComplexPortal"/>
</dbReference>
<dbReference type="GO" id="GO:0045582">
    <property type="term" value="P:positive regulation of T cell differentiation"/>
    <property type="evidence" value="ECO:0000303"/>
    <property type="project" value="ComplexPortal"/>
</dbReference>
<dbReference type="GO" id="GO:0045944">
    <property type="term" value="P:positive regulation of transcription by RNA polymerase II"/>
    <property type="evidence" value="ECO:0000266"/>
    <property type="project" value="MGI"/>
</dbReference>
<dbReference type="GO" id="GO:0070316">
    <property type="term" value="P:regulation of G0 to G1 transition"/>
    <property type="evidence" value="ECO:0000303"/>
    <property type="project" value="ComplexPortal"/>
</dbReference>
<dbReference type="GO" id="GO:2000045">
    <property type="term" value="P:regulation of G1/S transition of mitotic cell cycle"/>
    <property type="evidence" value="ECO:0000303"/>
    <property type="project" value="ComplexPortal"/>
</dbReference>
<dbReference type="GO" id="GO:0030071">
    <property type="term" value="P:regulation of mitotic metaphase/anaphase transition"/>
    <property type="evidence" value="ECO:0000303"/>
    <property type="project" value="ComplexPortal"/>
</dbReference>
<dbReference type="GO" id="GO:2000819">
    <property type="term" value="P:regulation of nucleotide-excision repair"/>
    <property type="evidence" value="ECO:0000303"/>
    <property type="project" value="ComplexPortal"/>
</dbReference>
<dbReference type="GO" id="GO:0006357">
    <property type="term" value="P:regulation of transcription by RNA polymerase II"/>
    <property type="evidence" value="ECO:0000303"/>
    <property type="project" value="ComplexPortal"/>
</dbReference>
<dbReference type="CDD" id="cd16866">
    <property type="entry name" value="ARID_ARID2"/>
    <property type="match status" value="1"/>
</dbReference>
<dbReference type="FunFam" id="1.10.10.10:FF:000253">
    <property type="entry name" value="AT-rich interactive domain-containing protein 2"/>
    <property type="match status" value="1"/>
</dbReference>
<dbReference type="FunFam" id="1.10.150.60:FF:000011">
    <property type="entry name" value="AT-rich interactive domain-containing protein 2"/>
    <property type="match status" value="1"/>
</dbReference>
<dbReference type="Gene3D" id="1.10.150.60">
    <property type="entry name" value="ARID DNA-binding domain"/>
    <property type="match status" value="1"/>
</dbReference>
<dbReference type="Gene3D" id="1.10.10.10">
    <property type="entry name" value="Winged helix-like DNA-binding domain superfamily/Winged helix DNA-binding domain"/>
    <property type="match status" value="1"/>
</dbReference>
<dbReference type="InterPro" id="IPR001606">
    <property type="entry name" value="ARID_dom"/>
</dbReference>
<dbReference type="InterPro" id="IPR036431">
    <property type="entry name" value="ARID_dom_sf"/>
</dbReference>
<dbReference type="InterPro" id="IPR016024">
    <property type="entry name" value="ARM-type_fold"/>
</dbReference>
<dbReference type="InterPro" id="IPR052406">
    <property type="entry name" value="Chromatin_Remodeling_Comp"/>
</dbReference>
<dbReference type="InterPro" id="IPR003150">
    <property type="entry name" value="DNA-bd_RFX"/>
</dbReference>
<dbReference type="InterPro" id="IPR036388">
    <property type="entry name" value="WH-like_DNA-bd_sf"/>
</dbReference>
<dbReference type="InterPro" id="IPR036390">
    <property type="entry name" value="WH_DNA-bd_sf"/>
</dbReference>
<dbReference type="InterPro" id="IPR013087">
    <property type="entry name" value="Znf_C2H2_type"/>
</dbReference>
<dbReference type="PANTHER" id="PTHR22970">
    <property type="entry name" value="AT-RICH INTERACTIVE DOMAIN-CONTAINING PROTEIN 2"/>
    <property type="match status" value="1"/>
</dbReference>
<dbReference type="PANTHER" id="PTHR22970:SF14">
    <property type="entry name" value="AT-RICH INTERACTIVE DOMAIN-CONTAINING PROTEIN 2"/>
    <property type="match status" value="1"/>
</dbReference>
<dbReference type="Pfam" id="PF01388">
    <property type="entry name" value="ARID"/>
    <property type="match status" value="1"/>
</dbReference>
<dbReference type="Pfam" id="PF02257">
    <property type="entry name" value="RFX_DNA_binding"/>
    <property type="match status" value="1"/>
</dbReference>
<dbReference type="SMART" id="SM01014">
    <property type="entry name" value="ARID"/>
    <property type="match status" value="1"/>
</dbReference>
<dbReference type="SMART" id="SM00501">
    <property type="entry name" value="BRIGHT"/>
    <property type="match status" value="1"/>
</dbReference>
<dbReference type="SUPFAM" id="SSF46774">
    <property type="entry name" value="ARID-like"/>
    <property type="match status" value="1"/>
</dbReference>
<dbReference type="SUPFAM" id="SSF48371">
    <property type="entry name" value="ARM repeat"/>
    <property type="match status" value="1"/>
</dbReference>
<dbReference type="SUPFAM" id="SSF46785">
    <property type="entry name" value="Winged helix' DNA-binding domain"/>
    <property type="match status" value="1"/>
</dbReference>
<dbReference type="PROSITE" id="PS51011">
    <property type="entry name" value="ARID"/>
    <property type="match status" value="1"/>
</dbReference>
<dbReference type="PROSITE" id="PS51526">
    <property type="entry name" value="RFX_DBD"/>
    <property type="match status" value="1"/>
</dbReference>
<dbReference type="PROSITE" id="PS00028">
    <property type="entry name" value="ZINC_FINGER_C2H2_1"/>
    <property type="match status" value="1"/>
</dbReference>
<reference key="1">
    <citation type="journal article" date="2009" name="PLoS Biol.">
        <title>Lineage-specific biology revealed by a finished genome assembly of the mouse.</title>
        <authorList>
            <person name="Church D.M."/>
            <person name="Goodstadt L."/>
            <person name="Hillier L.W."/>
            <person name="Zody M.C."/>
            <person name="Goldstein S."/>
            <person name="She X."/>
            <person name="Bult C.J."/>
            <person name="Agarwala R."/>
            <person name="Cherry J.L."/>
            <person name="DiCuccio M."/>
            <person name="Hlavina W."/>
            <person name="Kapustin Y."/>
            <person name="Meric P."/>
            <person name="Maglott D."/>
            <person name="Birtle Z."/>
            <person name="Marques A.C."/>
            <person name="Graves T."/>
            <person name="Zhou S."/>
            <person name="Teague B."/>
            <person name="Potamousis K."/>
            <person name="Churas C."/>
            <person name="Place M."/>
            <person name="Herschleb J."/>
            <person name="Runnheim R."/>
            <person name="Forrest D."/>
            <person name="Amos-Landgraf J."/>
            <person name="Schwartz D.C."/>
            <person name="Cheng Z."/>
            <person name="Lindblad-Toh K."/>
            <person name="Eichler E.E."/>
            <person name="Ponting C.P."/>
        </authorList>
    </citation>
    <scope>NUCLEOTIDE SEQUENCE [LARGE SCALE GENOMIC DNA]</scope>
    <source>
        <strain>C57BL/6J</strain>
    </source>
</reference>
<reference key="2">
    <citation type="journal article" date="2006" name="Biochem. Biophys. Res. Commun.">
        <title>Zipzap/p200 is a novel zinc finger protein contributing to cardiac gene regulation.</title>
        <authorList>
            <person name="Zhang X."/>
            <person name="Azhar G."/>
            <person name="Zhong Y."/>
            <person name="Wei J.Y."/>
        </authorList>
    </citation>
    <scope>TISSUE SPECIFICITY</scope>
    <source>
        <tissue>Heart</tissue>
    </source>
</reference>
<reference key="3">
    <citation type="journal article" date="2010" name="Cell">
        <title>A tissue-specific atlas of mouse protein phosphorylation and expression.</title>
        <authorList>
            <person name="Huttlin E.L."/>
            <person name="Jedrychowski M.P."/>
            <person name="Elias J.E."/>
            <person name="Goswami T."/>
            <person name="Rad R."/>
            <person name="Beausoleil S.A."/>
            <person name="Villen J."/>
            <person name="Haas W."/>
            <person name="Sowa M.E."/>
            <person name="Gygi S.P."/>
        </authorList>
    </citation>
    <scope>IDENTIFICATION BY MASS SPECTROMETRY [LARGE SCALE ANALYSIS]</scope>
    <source>
        <tissue>Testis</tissue>
    </source>
</reference>
<reference key="4">
    <citation type="journal article" date="2012" name="J. Biol. Chem.">
        <title>SWI/SNF chromatin-remodeling factors: multiscale analyses and diverse functions.</title>
        <authorList>
            <person name="Euskirchen G."/>
            <person name="Auerbach R.K."/>
            <person name="Snyder M."/>
        </authorList>
    </citation>
    <scope>REVIEW ON SWI/SNF CHROMATIN REMODELING COMPLEXES</scope>
</reference>
<reference key="5">
    <citation type="journal article" date="2015" name="Sci. Adv.">
        <title>Mammalian SWI/SNF chromatin remodeling complexes and cancer: Mechanistic insights gained from human genomics.</title>
        <authorList>
            <person name="Kadoch C."/>
            <person name="Crabtree G.R."/>
        </authorList>
    </citation>
    <scope>REVIEW ON SWI/SNF CHROMATIN REMODELING COMPLEXES</scope>
</reference>
<keyword id="KW-0007">Acetylation</keyword>
<keyword id="KW-0156">Chromatin regulator</keyword>
<keyword id="KW-0238">DNA-binding</keyword>
<keyword id="KW-1017">Isopeptide bond</keyword>
<keyword id="KW-0479">Metal-binding</keyword>
<keyword id="KW-0539">Nucleus</keyword>
<keyword id="KW-0597">Phosphoprotein</keyword>
<keyword id="KW-1185">Reference proteome</keyword>
<keyword id="KW-0804">Transcription</keyword>
<keyword id="KW-0805">Transcription regulation</keyword>
<keyword id="KW-0832">Ubl conjugation</keyword>
<keyword id="KW-0862">Zinc</keyword>
<keyword id="KW-0863">Zinc-finger</keyword>
<sequence>MANSTGKAPPDERRKGLAFLDELRQFHHSRGSPFKKIPAVGGKELDLHGLYTRVTTLGGFAKVSEKNQWGEIVEEFNFPRSCSNAAFALKQYYLRYLEKYEKVHHFGEDDDEVPPGNPKPQLPIGAIPSSYNYQQHSVSDYLRQSYGLSMDFNSPNDYNKLVLSLLSGLPNEVDFAINVCTLLSNESKHVMQLEKDPKIITLLLANAGVFDDTLGSFSSVFGEEWREKTDRDFVKFWKDIVDDNEVRDLISDRNKAHEDTPGEWIWESLFHPPRKLGINDIEGQRVLQIAVILRNLSFEESNVKLLAANRTCLRFLLLSAHSHFISLRQLGLDTLGNIAAELLLDPVDFRTTHLMFHTVTKCLMSRDRFLKMRGMEILGNLCKAEDNGVLICEYVDQDSYREIICHLTLPDVLLVTSTLEVLYMLTEMGDVACTKIAKVEKSIDVLVCLVSMDAQMFGPDALAAVKLIEHPSSSHQVLSEIRPQAIEQVQTQTHIASGPASRAVVAQHAAPPPGIVEIDSEKFACQWLNAHFEVNPDCSVSRAEMYSEYLSTCSKLARGGILTSTGFYKCLRTVFPNHTVKRVEDSTSSGQAHIHVIGVKRRALPLPIQMYYQQQPISTPVVRVDAVADLSPTPSPAGIPHGPQAAGNHFQRTPVTNQSSNLTATQMSFPVQGIHTVAQTVSRIPPNPSVHTHQQQNSPVTVIQNKAPIPCEVVKATVIQNSVPQTAVPVSISVGGAPAQNSVGQNHSAGPQPVTVVNSQTLLHHPSVMPQPSPLHTVVPGQVPSGTPVTVIQQTVPQSRMFGRVQSIPACTSTVSQGQQLITTSPQPMHTSSQQTAAGSQPQDTVIIAPPQYVTTSASNIVSATSVQNFQVATGQVVTIAGVPSPQPSRVGFQNIAPKPLPSQQVSPSVVQQPIQQPQQPAQQSVVIVSQPAQQGQAYAPAIHQIVLANPAALPAGQTVQLTGQPNITPSSSPSPVPPTNNQVPTAMSSSSTLQSQGPPPTVSQMLSVKRQQQQQHSPAAPAQQVQVQVQQPQQVQVQVQPQQPSAGVGQPAPNESSLIKQLLLPKRGPSTPGGKLILPAPQIPPPNNARAPSPQVVYQVANNQAAGFGVQGQTPAQQLLVGQQNVQLVQSAMPPAGGVQTVPISNLQILPGPLISNSPATIFQGTSGNQVTITVVPNTSFATATVSQGNAAQLIAPAGLSMSGAQASAGLQVQTLPAGQSACTTAPLPFKGDKIICQKEEEAKEATGLHVHERKIEVMENPSCRRGTTNTSNGDTSESELQVGSLLNGRKYSDSSLPPSNSGKLQSETSQCSLISNGPSLELGENGAPGKQNSEPVDMQDVKGDLKKALVNGICDFDKGDGSHLSKNIPNHKTSNHVGNGEISPVEPQGTSGATQQDTAKGDQLERVSNGPVLTLGGSPSTSSMQEAPSVATPPLSGTDLPNGPLASSLNSDVPQQRPSVVVSPHSTAPVIQGHQVIAVPHSGPRVTPSALSSDARSTNGTAECKTVKRPAEDNDRDTVPGIPNKVGVRIVTISDPNNAGCSATMVAVPAGADPSTVAKVAIESAAQQKQQHPPTYMQSVAPQNTPMPPSPAVQVQGQPSSSQPSPVSASSQHADPVRKPGQNFMCLWQSCKKWFQTPSQVFYHAATEHGGKDVYPGQCLWEGCEPFQRQRFSFITHLQDKHCSKDALLAGLKQDEPGQVANQKSSTKQPTVGGTGSAPRAQKAIASHPSAALMALRRGSRNLVFRDFTDEKEGPITKHIRLTAALILKNIGKYSECGRRLLKRHENNLSVLAISNMEASSTLAKCLYELNFTVQSKEQEKDSEML</sequence>
<gene>
    <name evidence="10" type="primary">Arid2</name>
    <name evidence="9" type="synonym">Baf200</name>
</gene>